<feature type="chain" id="PRO_1000007084" description="Large ribosomal subunit protein bL12">
    <location>
        <begin position="1"/>
        <end position="122"/>
    </location>
</feature>
<evidence type="ECO:0000255" key="1">
    <source>
        <dbReference type="HAMAP-Rule" id="MF_00368"/>
    </source>
</evidence>
<evidence type="ECO:0000305" key="2"/>
<accession>A3Q974</accession>
<organism>
    <name type="scientific">Shewanella loihica (strain ATCC BAA-1088 / PV-4)</name>
    <dbReference type="NCBI Taxonomy" id="323850"/>
    <lineage>
        <taxon>Bacteria</taxon>
        <taxon>Pseudomonadati</taxon>
        <taxon>Pseudomonadota</taxon>
        <taxon>Gammaproteobacteria</taxon>
        <taxon>Alteromonadales</taxon>
        <taxon>Shewanellaceae</taxon>
        <taxon>Shewanella</taxon>
    </lineage>
</organism>
<protein>
    <recommendedName>
        <fullName evidence="1">Large ribosomal subunit protein bL12</fullName>
    </recommendedName>
    <alternativeName>
        <fullName evidence="2">50S ribosomal protein L7/L12</fullName>
    </alternativeName>
</protein>
<keyword id="KW-1185">Reference proteome</keyword>
<keyword id="KW-0687">Ribonucleoprotein</keyword>
<keyword id="KW-0689">Ribosomal protein</keyword>
<dbReference type="EMBL" id="CP000606">
    <property type="protein sequence ID" value="ABO22022.1"/>
    <property type="molecule type" value="Genomic_DNA"/>
</dbReference>
<dbReference type="RefSeq" id="WP_011863959.1">
    <property type="nucleotide sequence ID" value="NC_009092.1"/>
</dbReference>
<dbReference type="SMR" id="A3Q974"/>
<dbReference type="STRING" id="323850.Shew_0150"/>
<dbReference type="KEGG" id="slo:Shew_0150"/>
<dbReference type="eggNOG" id="COG0222">
    <property type="taxonomic scope" value="Bacteria"/>
</dbReference>
<dbReference type="HOGENOM" id="CLU_086499_3_2_6"/>
<dbReference type="OrthoDB" id="9811748at2"/>
<dbReference type="Proteomes" id="UP000001558">
    <property type="component" value="Chromosome"/>
</dbReference>
<dbReference type="GO" id="GO:0022625">
    <property type="term" value="C:cytosolic large ribosomal subunit"/>
    <property type="evidence" value="ECO:0007669"/>
    <property type="project" value="TreeGrafter"/>
</dbReference>
<dbReference type="GO" id="GO:0003729">
    <property type="term" value="F:mRNA binding"/>
    <property type="evidence" value="ECO:0007669"/>
    <property type="project" value="TreeGrafter"/>
</dbReference>
<dbReference type="GO" id="GO:0003735">
    <property type="term" value="F:structural constituent of ribosome"/>
    <property type="evidence" value="ECO:0007669"/>
    <property type="project" value="InterPro"/>
</dbReference>
<dbReference type="GO" id="GO:0006412">
    <property type="term" value="P:translation"/>
    <property type="evidence" value="ECO:0007669"/>
    <property type="project" value="UniProtKB-UniRule"/>
</dbReference>
<dbReference type="CDD" id="cd00387">
    <property type="entry name" value="Ribosomal_L7_L12"/>
    <property type="match status" value="1"/>
</dbReference>
<dbReference type="FunFam" id="1.20.5.710:FF:000001">
    <property type="entry name" value="50S ribosomal protein L7/L12"/>
    <property type="match status" value="1"/>
</dbReference>
<dbReference type="FunFam" id="3.30.1390.10:FF:000001">
    <property type="entry name" value="50S ribosomal protein L7/L12"/>
    <property type="match status" value="1"/>
</dbReference>
<dbReference type="Gene3D" id="3.30.1390.10">
    <property type="match status" value="1"/>
</dbReference>
<dbReference type="Gene3D" id="1.20.5.710">
    <property type="entry name" value="Single helix bin"/>
    <property type="match status" value="1"/>
</dbReference>
<dbReference type="HAMAP" id="MF_00368">
    <property type="entry name" value="Ribosomal_bL12"/>
    <property type="match status" value="1"/>
</dbReference>
<dbReference type="InterPro" id="IPR000206">
    <property type="entry name" value="Ribosomal_bL12"/>
</dbReference>
<dbReference type="InterPro" id="IPR013823">
    <property type="entry name" value="Ribosomal_bL12_C"/>
</dbReference>
<dbReference type="InterPro" id="IPR014719">
    <property type="entry name" value="Ribosomal_bL12_C/ClpS-like"/>
</dbReference>
<dbReference type="InterPro" id="IPR008932">
    <property type="entry name" value="Ribosomal_bL12_oligo"/>
</dbReference>
<dbReference type="InterPro" id="IPR036235">
    <property type="entry name" value="Ribosomal_bL12_oligo_N_sf"/>
</dbReference>
<dbReference type="NCBIfam" id="TIGR00855">
    <property type="entry name" value="L12"/>
    <property type="match status" value="1"/>
</dbReference>
<dbReference type="PANTHER" id="PTHR45987">
    <property type="entry name" value="39S RIBOSOMAL PROTEIN L12"/>
    <property type="match status" value="1"/>
</dbReference>
<dbReference type="PANTHER" id="PTHR45987:SF4">
    <property type="entry name" value="LARGE RIBOSOMAL SUBUNIT PROTEIN BL12M"/>
    <property type="match status" value="1"/>
</dbReference>
<dbReference type="Pfam" id="PF00542">
    <property type="entry name" value="Ribosomal_L12"/>
    <property type="match status" value="1"/>
</dbReference>
<dbReference type="Pfam" id="PF16320">
    <property type="entry name" value="Ribosomal_L12_N"/>
    <property type="match status" value="1"/>
</dbReference>
<dbReference type="SUPFAM" id="SSF54736">
    <property type="entry name" value="ClpS-like"/>
    <property type="match status" value="1"/>
</dbReference>
<dbReference type="SUPFAM" id="SSF48300">
    <property type="entry name" value="Ribosomal protein L7/12, oligomerisation (N-terminal) domain"/>
    <property type="match status" value="1"/>
</dbReference>
<sequence length="122" mass="12532">MSITKDQILEALAAMSVMEVVELIEAMEEKFGVSAAAAVVSGGADAGAAAEEKTEFDVVMTSHGDNKVAVIKALRGATGLGLKEAKGMAESAPVAVKEGISKEEAEALKKELEEAGAQVEIK</sequence>
<proteinExistence type="inferred from homology"/>
<name>RL7_SHELP</name>
<reference key="1">
    <citation type="submission" date="2007-03" db="EMBL/GenBank/DDBJ databases">
        <title>Complete sequence of Shewanella loihica PV-4.</title>
        <authorList>
            <consortium name="US DOE Joint Genome Institute"/>
            <person name="Copeland A."/>
            <person name="Lucas S."/>
            <person name="Lapidus A."/>
            <person name="Barry K."/>
            <person name="Detter J.C."/>
            <person name="Glavina del Rio T."/>
            <person name="Hammon N."/>
            <person name="Israni S."/>
            <person name="Dalin E."/>
            <person name="Tice H."/>
            <person name="Pitluck S."/>
            <person name="Chain P."/>
            <person name="Malfatti S."/>
            <person name="Shin M."/>
            <person name="Vergez L."/>
            <person name="Schmutz J."/>
            <person name="Larimer F."/>
            <person name="Land M."/>
            <person name="Hauser L."/>
            <person name="Kyrpides N."/>
            <person name="Mikhailova N."/>
            <person name="Romine M.F."/>
            <person name="Serres G."/>
            <person name="Fredrickson J."/>
            <person name="Tiedje J."/>
            <person name="Richardson P."/>
        </authorList>
    </citation>
    <scope>NUCLEOTIDE SEQUENCE [LARGE SCALE GENOMIC DNA]</scope>
    <source>
        <strain>ATCC BAA-1088 / PV-4</strain>
    </source>
</reference>
<comment type="function">
    <text evidence="1">Forms part of the ribosomal stalk which helps the ribosome interact with GTP-bound translation factors. Is thus essential for accurate translation.</text>
</comment>
<comment type="subunit">
    <text evidence="1">Homodimer. Part of the ribosomal stalk of the 50S ribosomal subunit. Forms a multimeric L10(L12)X complex, where L10 forms an elongated spine to which 2 to 4 L12 dimers bind in a sequential fashion. Binds GTP-bound translation factors.</text>
</comment>
<comment type="similarity">
    <text evidence="1">Belongs to the bacterial ribosomal protein bL12 family.</text>
</comment>
<gene>
    <name evidence="1" type="primary">rplL</name>
    <name type="ordered locus">Shew_0150</name>
</gene>